<reference key="1">
    <citation type="journal article" date="2010" name="J. Bacteriol.">
        <title>Genome sequence of the Fleming strain of Micrococcus luteus, a simple free-living actinobacterium.</title>
        <authorList>
            <person name="Young M."/>
            <person name="Artsatbanov V."/>
            <person name="Beller H.R."/>
            <person name="Chandra G."/>
            <person name="Chater K.F."/>
            <person name="Dover L.G."/>
            <person name="Goh E.B."/>
            <person name="Kahan T."/>
            <person name="Kaprelyants A.S."/>
            <person name="Kyrpides N."/>
            <person name="Lapidus A."/>
            <person name="Lowry S.R."/>
            <person name="Lykidis A."/>
            <person name="Mahillon J."/>
            <person name="Markowitz V."/>
            <person name="Mavromatis K."/>
            <person name="Mukamolova G.V."/>
            <person name="Oren A."/>
            <person name="Rokem J.S."/>
            <person name="Smith M.C."/>
            <person name="Young D.I."/>
            <person name="Greenblatt C.L."/>
        </authorList>
    </citation>
    <scope>NUCLEOTIDE SEQUENCE [LARGE SCALE GENOMIC DNA]</scope>
    <source>
        <strain>ATCC 4698 / DSM 20030 / JCM 1464 / CCM 169 / CCUG 5858 / IAM 1056 / NBRC 3333 / NCIMB 9278 / NCTC 2665 / VKM Ac-2230</strain>
    </source>
</reference>
<keyword id="KW-0067">ATP-binding</keyword>
<keyword id="KW-0175">Coiled coil</keyword>
<keyword id="KW-0547">Nucleotide-binding</keyword>
<keyword id="KW-1185">Reference proteome</keyword>
<proteinExistence type="inferred from homology"/>
<dbReference type="EMBL" id="CP001628">
    <property type="protein sequence ID" value="ACS30691.1"/>
    <property type="molecule type" value="Genomic_DNA"/>
</dbReference>
<dbReference type="RefSeq" id="WP_010078668.1">
    <property type="nucleotide sequence ID" value="NC_012803.1"/>
</dbReference>
<dbReference type="SMR" id="C5CBU4"/>
<dbReference type="STRING" id="465515.Mlut_11860"/>
<dbReference type="EnsemblBacteria" id="ACS30691">
    <property type="protein sequence ID" value="ACS30691"/>
    <property type="gene ID" value="Mlut_11860"/>
</dbReference>
<dbReference type="GeneID" id="93345343"/>
<dbReference type="KEGG" id="mlu:Mlut_11860"/>
<dbReference type="PATRIC" id="fig|465515.4.peg.1127"/>
<dbReference type="eggNOG" id="COG1222">
    <property type="taxonomic scope" value="Bacteria"/>
</dbReference>
<dbReference type="HOGENOM" id="CLU_036054_0_0_11"/>
<dbReference type="Proteomes" id="UP000000738">
    <property type="component" value="Chromosome"/>
</dbReference>
<dbReference type="GO" id="GO:0000502">
    <property type="term" value="C:proteasome complex"/>
    <property type="evidence" value="ECO:0007669"/>
    <property type="project" value="InterPro"/>
</dbReference>
<dbReference type="GO" id="GO:0005524">
    <property type="term" value="F:ATP binding"/>
    <property type="evidence" value="ECO:0007669"/>
    <property type="project" value="UniProtKB-UniRule"/>
</dbReference>
<dbReference type="GO" id="GO:0016887">
    <property type="term" value="F:ATP hydrolysis activity"/>
    <property type="evidence" value="ECO:0007669"/>
    <property type="project" value="UniProtKB-UniRule"/>
</dbReference>
<dbReference type="GO" id="GO:0019941">
    <property type="term" value="P:modification-dependent protein catabolic process"/>
    <property type="evidence" value="ECO:0007669"/>
    <property type="project" value="InterPro"/>
</dbReference>
<dbReference type="GO" id="GO:0010498">
    <property type="term" value="P:proteasomal protein catabolic process"/>
    <property type="evidence" value="ECO:0007669"/>
    <property type="project" value="InterPro"/>
</dbReference>
<dbReference type="FunFam" id="3.40.50.300:FF:001025">
    <property type="entry name" value="ATPase family, AAA domain-containing 2B"/>
    <property type="match status" value="1"/>
</dbReference>
<dbReference type="Gene3D" id="1.10.8.60">
    <property type="match status" value="1"/>
</dbReference>
<dbReference type="Gene3D" id="1.20.5.170">
    <property type="match status" value="1"/>
</dbReference>
<dbReference type="Gene3D" id="2.40.50.140">
    <property type="entry name" value="Nucleic acid-binding proteins"/>
    <property type="match status" value="2"/>
</dbReference>
<dbReference type="Gene3D" id="3.40.50.300">
    <property type="entry name" value="P-loop containing nucleotide triphosphate hydrolases"/>
    <property type="match status" value="1"/>
</dbReference>
<dbReference type="HAMAP" id="MF_02112">
    <property type="entry name" value="ARC_ATPase"/>
    <property type="match status" value="1"/>
</dbReference>
<dbReference type="InterPro" id="IPR003593">
    <property type="entry name" value="AAA+_ATPase"/>
</dbReference>
<dbReference type="InterPro" id="IPR050168">
    <property type="entry name" value="AAA_ATPase_domain"/>
</dbReference>
<dbReference type="InterPro" id="IPR003959">
    <property type="entry name" value="ATPase_AAA_core"/>
</dbReference>
<dbReference type="InterPro" id="IPR003960">
    <property type="entry name" value="ATPase_AAA_CS"/>
</dbReference>
<dbReference type="InterPro" id="IPR012340">
    <property type="entry name" value="NA-bd_OB-fold"/>
</dbReference>
<dbReference type="InterPro" id="IPR027417">
    <property type="entry name" value="P-loop_NTPase"/>
</dbReference>
<dbReference type="InterPro" id="IPR032501">
    <property type="entry name" value="Prot_ATP_ID_OB_2nd"/>
</dbReference>
<dbReference type="InterPro" id="IPR041626">
    <property type="entry name" value="Prot_ATP_ID_OB_N"/>
</dbReference>
<dbReference type="InterPro" id="IPR022482">
    <property type="entry name" value="Proteasome_ATPase"/>
</dbReference>
<dbReference type="NCBIfam" id="TIGR03689">
    <property type="entry name" value="pup_AAA"/>
    <property type="match status" value="1"/>
</dbReference>
<dbReference type="PANTHER" id="PTHR23077">
    <property type="entry name" value="AAA-FAMILY ATPASE"/>
    <property type="match status" value="1"/>
</dbReference>
<dbReference type="PANTHER" id="PTHR23077:SF144">
    <property type="entry name" value="PROTEASOME-ASSOCIATED ATPASE"/>
    <property type="match status" value="1"/>
</dbReference>
<dbReference type="Pfam" id="PF00004">
    <property type="entry name" value="AAA"/>
    <property type="match status" value="1"/>
</dbReference>
<dbReference type="Pfam" id="PF16450">
    <property type="entry name" value="Prot_ATP_ID_OB_C"/>
    <property type="match status" value="1"/>
</dbReference>
<dbReference type="Pfam" id="PF17758">
    <property type="entry name" value="Prot_ATP_ID_OB_N"/>
    <property type="match status" value="1"/>
</dbReference>
<dbReference type="SMART" id="SM00382">
    <property type="entry name" value="AAA"/>
    <property type="match status" value="1"/>
</dbReference>
<dbReference type="SUPFAM" id="SSF52540">
    <property type="entry name" value="P-loop containing nucleoside triphosphate hydrolases"/>
    <property type="match status" value="1"/>
</dbReference>
<dbReference type="PROSITE" id="PS00674">
    <property type="entry name" value="AAA"/>
    <property type="match status" value="1"/>
</dbReference>
<name>ARC_MICLC</name>
<protein>
    <recommendedName>
        <fullName evidence="1">AAA ATPase forming ring-shaped complexes</fullName>
        <shortName evidence="1">ARC</shortName>
    </recommendedName>
</protein>
<organism>
    <name type="scientific">Micrococcus luteus (strain ATCC 4698 / DSM 20030 / JCM 1464 / CCM 169 / CCUG 5858 / IAM 1056 / NBRC 3333 / NCIMB 9278 / NCTC 2665 / VKM Ac-2230)</name>
    <name type="common">Micrococcus lysodeikticus</name>
    <dbReference type="NCBI Taxonomy" id="465515"/>
    <lineage>
        <taxon>Bacteria</taxon>
        <taxon>Bacillati</taxon>
        <taxon>Actinomycetota</taxon>
        <taxon>Actinomycetes</taxon>
        <taxon>Micrococcales</taxon>
        <taxon>Micrococcaceae</taxon>
        <taxon>Micrococcus</taxon>
    </lineage>
</organism>
<accession>C5CBU4</accession>
<comment type="subunit">
    <text evidence="1">Homohexamer. Assembles into a hexameric ring structure.</text>
</comment>
<comment type="similarity">
    <text evidence="1">Belongs to the AAA ATPase family.</text>
</comment>
<sequence>MDGAPVDHHAQSGTEHAEQRLAEARELLRQSQAEAERLRHQLQSAQRHAAGLSERRRAAEAQTQTAARNNRRMVELLEATRAEIATLKENLDAVTHPPFTFATLEAVHAPREPEEGVETGAVVRGGADVVQNGRRLRVTVSPLLDAARLTPGAQVLLDESSSIVGVAPGTGSGQLLRVKEALPDGGLVLAGTADEERVVRRAPALEGVELRHGDAVTVDARVEWALRRVELSEVDEVLLEEVPDVTFEDIGGLGPQIDRIREAVEIPFLHPEVYREHGLRAPKGIMLYGPPGTGKTMLAKAVANALSARSADGERSFFLNVKGPELLNKYVGETERQIRVIFDRAREKADAGFPVVIFFDEMESLFRTRGSGVSSDVETTIVPQLLTEIDGVEALENVIVIGASNREDMIDPAVLRPGRLDVKIRVDRPDAAGAAEIMAKHLTADVPLHADDVAAAGSADAARGTLIARTVAALYDRGAGTALAELTDVSGTTHALHLADLVSGAVVADVVDRAKRHAVRDYLAAGQAPAALGVREGHLREAVAAVLEDQTDLLATVAPAEWARTSGWRGPRLRSLRMVRGVEA</sequence>
<gene>
    <name evidence="1" type="primary">arc</name>
    <name type="ordered locus">Mlut_11860</name>
</gene>
<evidence type="ECO:0000255" key="1">
    <source>
        <dbReference type="HAMAP-Rule" id="MF_02112"/>
    </source>
</evidence>
<evidence type="ECO:0000256" key="2">
    <source>
        <dbReference type="SAM" id="MobiDB-lite"/>
    </source>
</evidence>
<feature type="chain" id="PRO_0000396991" description="AAA ATPase forming ring-shaped complexes">
    <location>
        <begin position="1"/>
        <end position="584"/>
    </location>
</feature>
<feature type="region of interest" description="Disordered" evidence="2">
    <location>
        <begin position="40"/>
        <end position="66"/>
    </location>
</feature>
<feature type="coiled-coil region" evidence="1">
    <location>
        <begin position="10"/>
        <end position="96"/>
    </location>
</feature>
<feature type="binding site" evidence="1">
    <location>
        <begin position="292"/>
        <end position="297"/>
    </location>
    <ligand>
        <name>ATP</name>
        <dbReference type="ChEBI" id="CHEBI:30616"/>
    </ligand>
</feature>